<organism>
    <name type="scientific">Limosilactobacillus reuteri subsp. reuteri (strain JCM 1112)</name>
    <name type="common">Lactobacillus reuteri</name>
    <dbReference type="NCBI Taxonomy" id="557433"/>
    <lineage>
        <taxon>Bacteria</taxon>
        <taxon>Bacillati</taxon>
        <taxon>Bacillota</taxon>
        <taxon>Bacilli</taxon>
        <taxon>Lactobacillales</taxon>
        <taxon>Lactobacillaceae</taxon>
        <taxon>Limosilactobacillus</taxon>
    </lineage>
</organism>
<proteinExistence type="inferred from homology"/>
<evidence type="ECO:0000255" key="1">
    <source>
        <dbReference type="HAMAP-Rule" id="MF_00033"/>
    </source>
</evidence>
<protein>
    <recommendedName>
        <fullName evidence="1">UDP-N-acetylglucosamine--N-acetylmuramyl-(pentapeptide) pyrophosphoryl-undecaprenol N-acetylglucosamine transferase</fullName>
        <ecNumber evidence="1">2.4.1.227</ecNumber>
    </recommendedName>
    <alternativeName>
        <fullName evidence="1">Undecaprenyl-PP-MurNAc-pentapeptide-UDPGlcNAc GlcNAc transferase</fullName>
    </alternativeName>
</protein>
<keyword id="KW-0131">Cell cycle</keyword>
<keyword id="KW-0132">Cell division</keyword>
<keyword id="KW-1003">Cell membrane</keyword>
<keyword id="KW-0133">Cell shape</keyword>
<keyword id="KW-0961">Cell wall biogenesis/degradation</keyword>
<keyword id="KW-0328">Glycosyltransferase</keyword>
<keyword id="KW-0472">Membrane</keyword>
<keyword id="KW-0573">Peptidoglycan synthesis</keyword>
<keyword id="KW-0808">Transferase</keyword>
<sequence length="370" mass="40607">MRLLVSGGGTGGHIYPALALIERLKQVEPDTEVLYVGTTRGLENKIVPDAGIELETMHMQGFKRSLSLENFKTIYLFLNSVHHAKKIISEFKPDVVLGTGGYVSGAVLYAAAKKHIPTVIHEQNSVVGVTNKFLSRYVDQIAIAFEAARSQFPADKVTMAGNPRAQQVAAKKDSDFSWTRYDLKDDVPTLMIFGGSQGAPKINKTVVDAIPEFNKRPYQVIFATGQKRYDDVKKQLAEGNIKPADNVKVVPYIKDMPAKMPRVAALVSRAGATTIAEVTALGVPTILIPSPYVTANHQVKNAQALVKNNAGLMITEDKLDARALLTQADKIMEDEEVRKEMAHAAEKMGRPDAADRLIKILHKAIDEHEK</sequence>
<gene>
    <name evidence="1" type="primary">murG</name>
    <name type="ordered locus">LAR_0571</name>
</gene>
<accession>B2G6K5</accession>
<comment type="function">
    <text evidence="1">Cell wall formation. Catalyzes the transfer of a GlcNAc subunit on undecaprenyl-pyrophosphoryl-MurNAc-pentapeptide (lipid intermediate I) to form undecaprenyl-pyrophosphoryl-MurNAc-(pentapeptide)GlcNAc (lipid intermediate II).</text>
</comment>
<comment type="catalytic activity">
    <reaction evidence="1">
        <text>Mur2Ac(oyl-L-Ala-gamma-D-Glu-L-Lys-D-Ala-D-Ala)-di-trans,octa-cis-undecaprenyl diphosphate + UDP-N-acetyl-alpha-D-glucosamine = beta-D-GlcNAc-(1-&gt;4)-Mur2Ac(oyl-L-Ala-gamma-D-Glu-L-Lys-D-Ala-D-Ala)-di-trans,octa-cis-undecaprenyl diphosphate + UDP + H(+)</text>
        <dbReference type="Rhea" id="RHEA:23192"/>
        <dbReference type="ChEBI" id="CHEBI:15378"/>
        <dbReference type="ChEBI" id="CHEBI:57705"/>
        <dbReference type="ChEBI" id="CHEBI:58223"/>
        <dbReference type="ChEBI" id="CHEBI:60032"/>
        <dbReference type="ChEBI" id="CHEBI:60033"/>
        <dbReference type="EC" id="2.4.1.227"/>
    </reaction>
</comment>
<comment type="pathway">
    <text evidence="1">Cell wall biogenesis; peptidoglycan biosynthesis.</text>
</comment>
<comment type="subcellular location">
    <subcellularLocation>
        <location evidence="1">Cell membrane</location>
        <topology evidence="1">Peripheral membrane protein</topology>
        <orientation evidence="1">Cytoplasmic side</orientation>
    </subcellularLocation>
</comment>
<comment type="similarity">
    <text evidence="1">Belongs to the glycosyltransferase 28 family. MurG subfamily.</text>
</comment>
<name>MURG_LIMRJ</name>
<dbReference type="EC" id="2.4.1.227" evidence="1"/>
<dbReference type="EMBL" id="AP007281">
    <property type="protein sequence ID" value="BAG25087.1"/>
    <property type="molecule type" value="Genomic_DNA"/>
</dbReference>
<dbReference type="RefSeq" id="WP_003668321.1">
    <property type="nucleotide sequence ID" value="NC_010609.1"/>
</dbReference>
<dbReference type="SMR" id="B2G6K5"/>
<dbReference type="CAZy" id="GT28">
    <property type="family name" value="Glycosyltransferase Family 28"/>
</dbReference>
<dbReference type="KEGG" id="lrf:LAR_0571"/>
<dbReference type="HOGENOM" id="CLU_037404_0_1_9"/>
<dbReference type="UniPathway" id="UPA00219"/>
<dbReference type="GO" id="GO:0005886">
    <property type="term" value="C:plasma membrane"/>
    <property type="evidence" value="ECO:0007669"/>
    <property type="project" value="UniProtKB-SubCell"/>
</dbReference>
<dbReference type="GO" id="GO:0050511">
    <property type="term" value="F:undecaprenyldiphospho-muramoylpentapeptide beta-N-acetylglucosaminyltransferase activity"/>
    <property type="evidence" value="ECO:0007669"/>
    <property type="project" value="UniProtKB-UniRule"/>
</dbReference>
<dbReference type="GO" id="GO:0005975">
    <property type="term" value="P:carbohydrate metabolic process"/>
    <property type="evidence" value="ECO:0007669"/>
    <property type="project" value="InterPro"/>
</dbReference>
<dbReference type="GO" id="GO:0051301">
    <property type="term" value="P:cell division"/>
    <property type="evidence" value="ECO:0007669"/>
    <property type="project" value="UniProtKB-KW"/>
</dbReference>
<dbReference type="GO" id="GO:0071555">
    <property type="term" value="P:cell wall organization"/>
    <property type="evidence" value="ECO:0007669"/>
    <property type="project" value="UniProtKB-KW"/>
</dbReference>
<dbReference type="GO" id="GO:0030259">
    <property type="term" value="P:lipid glycosylation"/>
    <property type="evidence" value="ECO:0007669"/>
    <property type="project" value="UniProtKB-UniRule"/>
</dbReference>
<dbReference type="GO" id="GO:0009252">
    <property type="term" value="P:peptidoglycan biosynthetic process"/>
    <property type="evidence" value="ECO:0007669"/>
    <property type="project" value="UniProtKB-UniRule"/>
</dbReference>
<dbReference type="GO" id="GO:0008360">
    <property type="term" value="P:regulation of cell shape"/>
    <property type="evidence" value="ECO:0007669"/>
    <property type="project" value="UniProtKB-KW"/>
</dbReference>
<dbReference type="CDD" id="cd03785">
    <property type="entry name" value="GT28_MurG"/>
    <property type="match status" value="1"/>
</dbReference>
<dbReference type="Gene3D" id="3.40.50.2000">
    <property type="entry name" value="Glycogen Phosphorylase B"/>
    <property type="match status" value="2"/>
</dbReference>
<dbReference type="HAMAP" id="MF_00033">
    <property type="entry name" value="MurG"/>
    <property type="match status" value="1"/>
</dbReference>
<dbReference type="InterPro" id="IPR006009">
    <property type="entry name" value="GlcNAc_MurG"/>
</dbReference>
<dbReference type="InterPro" id="IPR007235">
    <property type="entry name" value="Glyco_trans_28_C"/>
</dbReference>
<dbReference type="InterPro" id="IPR004276">
    <property type="entry name" value="GlycoTrans_28_N"/>
</dbReference>
<dbReference type="NCBIfam" id="TIGR01133">
    <property type="entry name" value="murG"/>
    <property type="match status" value="1"/>
</dbReference>
<dbReference type="PANTHER" id="PTHR21015:SF22">
    <property type="entry name" value="GLYCOSYLTRANSFERASE"/>
    <property type="match status" value="1"/>
</dbReference>
<dbReference type="PANTHER" id="PTHR21015">
    <property type="entry name" value="UDP-N-ACETYLGLUCOSAMINE--N-ACETYLMURAMYL-(PENTAPEPTIDE) PYROPHOSPHORYL-UNDECAPRENOL N-ACETYLGLUCOSAMINE TRANSFERASE 1"/>
    <property type="match status" value="1"/>
</dbReference>
<dbReference type="Pfam" id="PF04101">
    <property type="entry name" value="Glyco_tran_28_C"/>
    <property type="match status" value="1"/>
</dbReference>
<dbReference type="Pfam" id="PF03033">
    <property type="entry name" value="Glyco_transf_28"/>
    <property type="match status" value="1"/>
</dbReference>
<dbReference type="SUPFAM" id="SSF53756">
    <property type="entry name" value="UDP-Glycosyltransferase/glycogen phosphorylase"/>
    <property type="match status" value="1"/>
</dbReference>
<reference key="1">
    <citation type="journal article" date="2008" name="DNA Res.">
        <title>Comparative genome analysis of Lactobacillus reuteri and Lactobacillus fermentum reveal a genomic island for reuterin and cobalamin production.</title>
        <authorList>
            <person name="Morita H."/>
            <person name="Toh H."/>
            <person name="Fukuda S."/>
            <person name="Horikawa H."/>
            <person name="Oshima K."/>
            <person name="Suzuki T."/>
            <person name="Murakami M."/>
            <person name="Hisamatsu S."/>
            <person name="Kato Y."/>
            <person name="Takizawa T."/>
            <person name="Fukuoka H."/>
            <person name="Yoshimura T."/>
            <person name="Itoh K."/>
            <person name="O'Sullivan D.J."/>
            <person name="McKay L.L."/>
            <person name="Ohno H."/>
            <person name="Kikuchi J."/>
            <person name="Masaoka T."/>
            <person name="Hattori M."/>
        </authorList>
    </citation>
    <scope>NUCLEOTIDE SEQUENCE [LARGE SCALE GENOMIC DNA]</scope>
    <source>
        <strain>JCM 1112</strain>
    </source>
</reference>
<feature type="chain" id="PRO_1000090444" description="UDP-N-acetylglucosamine--N-acetylmuramyl-(pentapeptide) pyrophosphoryl-undecaprenol N-acetylglucosamine transferase">
    <location>
        <begin position="1"/>
        <end position="370"/>
    </location>
</feature>
<feature type="binding site" evidence="1">
    <location>
        <begin position="10"/>
        <end position="12"/>
    </location>
    <ligand>
        <name>UDP-N-acetyl-alpha-D-glucosamine</name>
        <dbReference type="ChEBI" id="CHEBI:57705"/>
    </ligand>
</feature>
<feature type="binding site" evidence="1">
    <location>
        <position position="124"/>
    </location>
    <ligand>
        <name>UDP-N-acetyl-alpha-D-glucosamine</name>
        <dbReference type="ChEBI" id="CHEBI:57705"/>
    </ligand>
</feature>
<feature type="binding site" evidence="1">
    <location>
        <position position="196"/>
    </location>
    <ligand>
        <name>UDP-N-acetyl-alpha-D-glucosamine</name>
        <dbReference type="ChEBI" id="CHEBI:57705"/>
    </ligand>
</feature>
<feature type="binding site" evidence="1">
    <location>
        <position position="253"/>
    </location>
    <ligand>
        <name>UDP-N-acetyl-alpha-D-glucosamine</name>
        <dbReference type="ChEBI" id="CHEBI:57705"/>
    </ligand>
</feature>
<feature type="binding site" evidence="1">
    <location>
        <position position="298"/>
    </location>
    <ligand>
        <name>UDP-N-acetyl-alpha-D-glucosamine</name>
        <dbReference type="ChEBI" id="CHEBI:57705"/>
    </ligand>
</feature>